<name>DUT_SHEB9</name>
<keyword id="KW-0378">Hydrolase</keyword>
<keyword id="KW-0460">Magnesium</keyword>
<keyword id="KW-0479">Metal-binding</keyword>
<keyword id="KW-0546">Nucleotide metabolism</keyword>
<proteinExistence type="inferred from homology"/>
<sequence>MKTPIELKILDSRIGSEFPLPAYATPGSAGMDLRAMIDTTLTIAPGETVLIPTGIAIHVADPGLAAVILPRSGLGHKHGIVLGNLVGLIDSDYQGPLMVSCWNRSDSPFALEIGDRLAQLVFVPVVQAQFKLVDEFDSSDRGEGGFGHSGTK</sequence>
<evidence type="ECO:0000255" key="1">
    <source>
        <dbReference type="HAMAP-Rule" id="MF_00116"/>
    </source>
</evidence>
<accession>A9KY02</accession>
<dbReference type="EC" id="3.6.1.23" evidence="1"/>
<dbReference type="EMBL" id="CP000891">
    <property type="protein sequence ID" value="ABX47567.1"/>
    <property type="molecule type" value="Genomic_DNA"/>
</dbReference>
<dbReference type="RefSeq" id="WP_006086674.1">
    <property type="nucleotide sequence ID" value="NC_009997.1"/>
</dbReference>
<dbReference type="SMR" id="A9KY02"/>
<dbReference type="GeneID" id="11770725"/>
<dbReference type="KEGG" id="sbn:Sbal195_0386"/>
<dbReference type="HOGENOM" id="CLU_068508_1_1_6"/>
<dbReference type="UniPathway" id="UPA00610">
    <property type="reaction ID" value="UER00666"/>
</dbReference>
<dbReference type="Proteomes" id="UP000000770">
    <property type="component" value="Chromosome"/>
</dbReference>
<dbReference type="GO" id="GO:0004170">
    <property type="term" value="F:dUTP diphosphatase activity"/>
    <property type="evidence" value="ECO:0007669"/>
    <property type="project" value="UniProtKB-UniRule"/>
</dbReference>
<dbReference type="GO" id="GO:0000287">
    <property type="term" value="F:magnesium ion binding"/>
    <property type="evidence" value="ECO:0007669"/>
    <property type="project" value="UniProtKB-UniRule"/>
</dbReference>
<dbReference type="GO" id="GO:0006226">
    <property type="term" value="P:dUMP biosynthetic process"/>
    <property type="evidence" value="ECO:0007669"/>
    <property type="project" value="UniProtKB-UniRule"/>
</dbReference>
<dbReference type="GO" id="GO:0046081">
    <property type="term" value="P:dUTP catabolic process"/>
    <property type="evidence" value="ECO:0007669"/>
    <property type="project" value="InterPro"/>
</dbReference>
<dbReference type="CDD" id="cd07557">
    <property type="entry name" value="trimeric_dUTPase"/>
    <property type="match status" value="1"/>
</dbReference>
<dbReference type="FunFam" id="2.70.40.10:FF:000002">
    <property type="entry name" value="dUTP diphosphatase"/>
    <property type="match status" value="1"/>
</dbReference>
<dbReference type="Gene3D" id="2.70.40.10">
    <property type="match status" value="1"/>
</dbReference>
<dbReference type="HAMAP" id="MF_00116">
    <property type="entry name" value="dUTPase_bact"/>
    <property type="match status" value="1"/>
</dbReference>
<dbReference type="InterPro" id="IPR008181">
    <property type="entry name" value="dUTPase"/>
</dbReference>
<dbReference type="InterPro" id="IPR029054">
    <property type="entry name" value="dUTPase-like"/>
</dbReference>
<dbReference type="InterPro" id="IPR036157">
    <property type="entry name" value="dUTPase-like_sf"/>
</dbReference>
<dbReference type="InterPro" id="IPR033704">
    <property type="entry name" value="dUTPase_trimeric"/>
</dbReference>
<dbReference type="NCBIfam" id="TIGR00576">
    <property type="entry name" value="dut"/>
    <property type="match status" value="1"/>
</dbReference>
<dbReference type="NCBIfam" id="NF001862">
    <property type="entry name" value="PRK00601.1"/>
    <property type="match status" value="1"/>
</dbReference>
<dbReference type="PANTHER" id="PTHR11241">
    <property type="entry name" value="DEOXYURIDINE 5'-TRIPHOSPHATE NUCLEOTIDOHYDROLASE"/>
    <property type="match status" value="1"/>
</dbReference>
<dbReference type="PANTHER" id="PTHR11241:SF0">
    <property type="entry name" value="DEOXYURIDINE 5'-TRIPHOSPHATE NUCLEOTIDOHYDROLASE"/>
    <property type="match status" value="1"/>
</dbReference>
<dbReference type="Pfam" id="PF00692">
    <property type="entry name" value="dUTPase"/>
    <property type="match status" value="1"/>
</dbReference>
<dbReference type="SUPFAM" id="SSF51283">
    <property type="entry name" value="dUTPase-like"/>
    <property type="match status" value="1"/>
</dbReference>
<organism>
    <name type="scientific">Shewanella baltica (strain OS195)</name>
    <dbReference type="NCBI Taxonomy" id="399599"/>
    <lineage>
        <taxon>Bacteria</taxon>
        <taxon>Pseudomonadati</taxon>
        <taxon>Pseudomonadota</taxon>
        <taxon>Gammaproteobacteria</taxon>
        <taxon>Alteromonadales</taxon>
        <taxon>Shewanellaceae</taxon>
        <taxon>Shewanella</taxon>
    </lineage>
</organism>
<reference key="1">
    <citation type="submission" date="2007-11" db="EMBL/GenBank/DDBJ databases">
        <title>Complete sequence of chromosome of Shewanella baltica OS195.</title>
        <authorList>
            <consortium name="US DOE Joint Genome Institute"/>
            <person name="Copeland A."/>
            <person name="Lucas S."/>
            <person name="Lapidus A."/>
            <person name="Barry K."/>
            <person name="Glavina del Rio T."/>
            <person name="Dalin E."/>
            <person name="Tice H."/>
            <person name="Pitluck S."/>
            <person name="Chain P."/>
            <person name="Malfatti S."/>
            <person name="Shin M."/>
            <person name="Vergez L."/>
            <person name="Schmutz J."/>
            <person name="Larimer F."/>
            <person name="Land M."/>
            <person name="Hauser L."/>
            <person name="Kyrpides N."/>
            <person name="Kim E."/>
            <person name="Brettar I."/>
            <person name="Rodrigues J."/>
            <person name="Konstantinidis K."/>
            <person name="Klappenbach J."/>
            <person name="Hofle M."/>
            <person name="Tiedje J."/>
            <person name="Richardson P."/>
        </authorList>
    </citation>
    <scope>NUCLEOTIDE SEQUENCE [LARGE SCALE GENOMIC DNA]</scope>
    <source>
        <strain>OS195</strain>
    </source>
</reference>
<feature type="chain" id="PRO_1000076070" description="Deoxyuridine 5'-triphosphate nucleotidohydrolase">
    <location>
        <begin position="1"/>
        <end position="152"/>
    </location>
</feature>
<feature type="binding site" evidence="1">
    <location>
        <begin position="71"/>
        <end position="73"/>
    </location>
    <ligand>
        <name>substrate</name>
    </ligand>
</feature>
<feature type="binding site" evidence="1">
    <location>
        <position position="84"/>
    </location>
    <ligand>
        <name>substrate</name>
    </ligand>
</feature>
<feature type="binding site" evidence="1">
    <location>
        <begin position="88"/>
        <end position="90"/>
    </location>
    <ligand>
        <name>substrate</name>
    </ligand>
</feature>
<feature type="binding site" evidence="1">
    <location>
        <position position="98"/>
    </location>
    <ligand>
        <name>substrate</name>
    </ligand>
</feature>
<gene>
    <name evidence="1" type="primary">dut</name>
    <name type="ordered locus">Sbal195_0386</name>
</gene>
<protein>
    <recommendedName>
        <fullName evidence="1">Deoxyuridine 5'-triphosphate nucleotidohydrolase</fullName>
        <shortName evidence="1">dUTPase</shortName>
        <ecNumber evidence="1">3.6.1.23</ecNumber>
    </recommendedName>
    <alternativeName>
        <fullName evidence="1">dUTP pyrophosphatase</fullName>
    </alternativeName>
</protein>
<comment type="function">
    <text evidence="1">This enzyme is involved in nucleotide metabolism: it produces dUMP, the immediate precursor of thymidine nucleotides and it decreases the intracellular concentration of dUTP so that uracil cannot be incorporated into DNA.</text>
</comment>
<comment type="catalytic activity">
    <reaction evidence="1">
        <text>dUTP + H2O = dUMP + diphosphate + H(+)</text>
        <dbReference type="Rhea" id="RHEA:10248"/>
        <dbReference type="ChEBI" id="CHEBI:15377"/>
        <dbReference type="ChEBI" id="CHEBI:15378"/>
        <dbReference type="ChEBI" id="CHEBI:33019"/>
        <dbReference type="ChEBI" id="CHEBI:61555"/>
        <dbReference type="ChEBI" id="CHEBI:246422"/>
        <dbReference type="EC" id="3.6.1.23"/>
    </reaction>
</comment>
<comment type="cofactor">
    <cofactor evidence="1">
        <name>Mg(2+)</name>
        <dbReference type="ChEBI" id="CHEBI:18420"/>
    </cofactor>
</comment>
<comment type="pathway">
    <text evidence="1">Pyrimidine metabolism; dUMP biosynthesis; dUMP from dCTP (dUTP route): step 2/2.</text>
</comment>
<comment type="similarity">
    <text evidence="1">Belongs to the dUTPase family.</text>
</comment>